<evidence type="ECO:0000255" key="1">
    <source>
        <dbReference type="HAMAP-Rule" id="MF_00102"/>
    </source>
</evidence>
<evidence type="ECO:0000305" key="2"/>
<name>DAPB_LACLM</name>
<comment type="function">
    <text evidence="1">Catalyzes the conversion of 4-hydroxy-tetrahydrodipicolinate (HTPA) to tetrahydrodipicolinate.</text>
</comment>
<comment type="catalytic activity">
    <reaction evidence="1">
        <text>(S)-2,3,4,5-tetrahydrodipicolinate + NAD(+) + H2O = (2S,4S)-4-hydroxy-2,3,4,5-tetrahydrodipicolinate + NADH + H(+)</text>
        <dbReference type="Rhea" id="RHEA:35323"/>
        <dbReference type="ChEBI" id="CHEBI:15377"/>
        <dbReference type="ChEBI" id="CHEBI:15378"/>
        <dbReference type="ChEBI" id="CHEBI:16845"/>
        <dbReference type="ChEBI" id="CHEBI:57540"/>
        <dbReference type="ChEBI" id="CHEBI:57945"/>
        <dbReference type="ChEBI" id="CHEBI:67139"/>
        <dbReference type="EC" id="1.17.1.8"/>
    </reaction>
</comment>
<comment type="catalytic activity">
    <reaction evidence="1">
        <text>(S)-2,3,4,5-tetrahydrodipicolinate + NADP(+) + H2O = (2S,4S)-4-hydroxy-2,3,4,5-tetrahydrodipicolinate + NADPH + H(+)</text>
        <dbReference type="Rhea" id="RHEA:35331"/>
        <dbReference type="ChEBI" id="CHEBI:15377"/>
        <dbReference type="ChEBI" id="CHEBI:15378"/>
        <dbReference type="ChEBI" id="CHEBI:16845"/>
        <dbReference type="ChEBI" id="CHEBI:57783"/>
        <dbReference type="ChEBI" id="CHEBI:58349"/>
        <dbReference type="ChEBI" id="CHEBI:67139"/>
        <dbReference type="EC" id="1.17.1.8"/>
    </reaction>
</comment>
<comment type="pathway">
    <text evidence="1">Amino-acid biosynthesis; L-lysine biosynthesis via DAP pathway; (S)-tetrahydrodipicolinate from L-aspartate: step 4/4.</text>
</comment>
<comment type="subcellular location">
    <subcellularLocation>
        <location evidence="1">Cytoplasm</location>
    </subcellularLocation>
</comment>
<comment type="similarity">
    <text evidence="1">Belongs to the DapB family.</text>
</comment>
<comment type="caution">
    <text evidence="2">Was originally thought to be a dihydrodipicolinate reductase (DHDPR), catalyzing the conversion of dihydrodipicolinate to tetrahydrodipicolinate. However, it was shown in E.coli that the substrate of the enzymatic reaction is not dihydrodipicolinate (DHDP) but in fact (2S,4S)-4-hydroxy-2,3,4,5-tetrahydrodipicolinic acid (HTPA), the product released by the DapA-catalyzed reaction.</text>
</comment>
<proteinExistence type="inferred from homology"/>
<organism>
    <name type="scientific">Lactococcus lactis subsp. cremoris (strain MG1363)</name>
    <dbReference type="NCBI Taxonomy" id="416870"/>
    <lineage>
        <taxon>Bacteria</taxon>
        <taxon>Bacillati</taxon>
        <taxon>Bacillota</taxon>
        <taxon>Bacilli</taxon>
        <taxon>Lactobacillales</taxon>
        <taxon>Streptococcaceae</taxon>
        <taxon>Lactococcus</taxon>
        <taxon>Lactococcus cremoris subsp. cremoris</taxon>
    </lineage>
</organism>
<gene>
    <name evidence="1" type="primary">dapB</name>
    <name type="ordered locus">llmg_0940</name>
</gene>
<protein>
    <recommendedName>
        <fullName evidence="1">4-hydroxy-tetrahydrodipicolinate reductase</fullName>
        <shortName evidence="1">HTPA reductase</shortName>
        <ecNumber evidence="1">1.17.1.8</ecNumber>
    </recommendedName>
</protein>
<dbReference type="EC" id="1.17.1.8" evidence="1"/>
<dbReference type="EMBL" id="AM406671">
    <property type="protein sequence ID" value="CAL97534.1"/>
    <property type="molecule type" value="Genomic_DNA"/>
</dbReference>
<dbReference type="RefSeq" id="WP_011834885.1">
    <property type="nucleotide sequence ID" value="NC_009004.1"/>
</dbReference>
<dbReference type="SMR" id="A2RJS9"/>
<dbReference type="STRING" id="416870.llmg_0940"/>
<dbReference type="GeneID" id="61109803"/>
<dbReference type="KEGG" id="llm:llmg_0940"/>
<dbReference type="eggNOG" id="COG0289">
    <property type="taxonomic scope" value="Bacteria"/>
</dbReference>
<dbReference type="HOGENOM" id="CLU_047479_0_1_9"/>
<dbReference type="OrthoDB" id="9790352at2"/>
<dbReference type="PhylomeDB" id="A2RJS9"/>
<dbReference type="UniPathway" id="UPA00034">
    <property type="reaction ID" value="UER00018"/>
</dbReference>
<dbReference type="Proteomes" id="UP000000364">
    <property type="component" value="Chromosome"/>
</dbReference>
<dbReference type="GO" id="GO:0005829">
    <property type="term" value="C:cytosol"/>
    <property type="evidence" value="ECO:0007669"/>
    <property type="project" value="TreeGrafter"/>
</dbReference>
<dbReference type="GO" id="GO:0008839">
    <property type="term" value="F:4-hydroxy-tetrahydrodipicolinate reductase"/>
    <property type="evidence" value="ECO:0007669"/>
    <property type="project" value="UniProtKB-EC"/>
</dbReference>
<dbReference type="GO" id="GO:0051287">
    <property type="term" value="F:NAD binding"/>
    <property type="evidence" value="ECO:0007669"/>
    <property type="project" value="UniProtKB-UniRule"/>
</dbReference>
<dbReference type="GO" id="GO:0050661">
    <property type="term" value="F:NADP binding"/>
    <property type="evidence" value="ECO:0007669"/>
    <property type="project" value="UniProtKB-UniRule"/>
</dbReference>
<dbReference type="GO" id="GO:0016726">
    <property type="term" value="F:oxidoreductase activity, acting on CH or CH2 groups, NAD or NADP as acceptor"/>
    <property type="evidence" value="ECO:0007669"/>
    <property type="project" value="UniProtKB-UniRule"/>
</dbReference>
<dbReference type="GO" id="GO:0019877">
    <property type="term" value="P:diaminopimelate biosynthetic process"/>
    <property type="evidence" value="ECO:0007669"/>
    <property type="project" value="UniProtKB-UniRule"/>
</dbReference>
<dbReference type="GO" id="GO:0009089">
    <property type="term" value="P:lysine biosynthetic process via diaminopimelate"/>
    <property type="evidence" value="ECO:0007669"/>
    <property type="project" value="UniProtKB-UniRule"/>
</dbReference>
<dbReference type="CDD" id="cd02274">
    <property type="entry name" value="DHDPR_N"/>
    <property type="match status" value="1"/>
</dbReference>
<dbReference type="FunFam" id="3.30.360.10:FF:000009">
    <property type="entry name" value="4-hydroxy-tetrahydrodipicolinate reductase"/>
    <property type="match status" value="1"/>
</dbReference>
<dbReference type="Gene3D" id="3.30.360.10">
    <property type="entry name" value="Dihydrodipicolinate Reductase, domain 2"/>
    <property type="match status" value="1"/>
</dbReference>
<dbReference type="Gene3D" id="3.40.50.720">
    <property type="entry name" value="NAD(P)-binding Rossmann-like Domain"/>
    <property type="match status" value="1"/>
</dbReference>
<dbReference type="HAMAP" id="MF_00102">
    <property type="entry name" value="DapB"/>
    <property type="match status" value="1"/>
</dbReference>
<dbReference type="InterPro" id="IPR022663">
    <property type="entry name" value="DapB_C"/>
</dbReference>
<dbReference type="InterPro" id="IPR000846">
    <property type="entry name" value="DapB_N"/>
</dbReference>
<dbReference type="InterPro" id="IPR022664">
    <property type="entry name" value="DapB_N_CS"/>
</dbReference>
<dbReference type="InterPro" id="IPR023940">
    <property type="entry name" value="DHDPR_bac"/>
</dbReference>
<dbReference type="InterPro" id="IPR036291">
    <property type="entry name" value="NAD(P)-bd_dom_sf"/>
</dbReference>
<dbReference type="NCBIfam" id="TIGR00036">
    <property type="entry name" value="dapB"/>
    <property type="match status" value="1"/>
</dbReference>
<dbReference type="PANTHER" id="PTHR20836:SF0">
    <property type="entry name" value="4-HYDROXY-TETRAHYDRODIPICOLINATE REDUCTASE 1, CHLOROPLASTIC-RELATED"/>
    <property type="match status" value="1"/>
</dbReference>
<dbReference type="PANTHER" id="PTHR20836">
    <property type="entry name" value="DIHYDRODIPICOLINATE REDUCTASE"/>
    <property type="match status" value="1"/>
</dbReference>
<dbReference type="Pfam" id="PF05173">
    <property type="entry name" value="DapB_C"/>
    <property type="match status" value="1"/>
</dbReference>
<dbReference type="Pfam" id="PF01113">
    <property type="entry name" value="DapB_N"/>
    <property type="match status" value="1"/>
</dbReference>
<dbReference type="PIRSF" id="PIRSF000161">
    <property type="entry name" value="DHPR"/>
    <property type="match status" value="1"/>
</dbReference>
<dbReference type="SUPFAM" id="SSF55347">
    <property type="entry name" value="Glyceraldehyde-3-phosphate dehydrogenase-like, C-terminal domain"/>
    <property type="match status" value="1"/>
</dbReference>
<dbReference type="SUPFAM" id="SSF51735">
    <property type="entry name" value="NAD(P)-binding Rossmann-fold domains"/>
    <property type="match status" value="1"/>
</dbReference>
<dbReference type="PROSITE" id="PS01298">
    <property type="entry name" value="DAPB"/>
    <property type="match status" value="1"/>
</dbReference>
<sequence length="260" mass="28673">MILNKIKVVVAGFRGKMGSTAVQMILNAPNFELVALLGRKEEVSEAFDVPVFNRKEELENIEADVWLDLTAPEVAYENTYFALEHGLRPVVGTTGFTEDEVARLIKFSREKELGGLIAPNFALGAVLLMQFSKQAVKYFPDVEIIELHHDGKKDAPSGTAVKTAELMAEERLAHHQGAVDEKESLVGARGAVLEGMRIHSVRLPGLVAHQEVIFGSKGEGLTLRHDSYDRSSFMTGIALGIRKVMTVSELKYGLEHFLDL</sequence>
<feature type="chain" id="PRO_1000008575" description="4-hydroxy-tetrahydrodipicolinate reductase">
    <location>
        <begin position="1"/>
        <end position="260"/>
    </location>
</feature>
<feature type="active site" description="Proton donor/acceptor" evidence="1">
    <location>
        <position position="148"/>
    </location>
</feature>
<feature type="active site" description="Proton donor" evidence="1">
    <location>
        <position position="152"/>
    </location>
</feature>
<feature type="binding site" evidence="1">
    <location>
        <begin position="12"/>
        <end position="17"/>
    </location>
    <ligand>
        <name>NAD(+)</name>
        <dbReference type="ChEBI" id="CHEBI:57540"/>
    </ligand>
</feature>
<feature type="binding site" evidence="1">
    <location>
        <begin position="92"/>
        <end position="94"/>
    </location>
    <ligand>
        <name>NAD(+)</name>
        <dbReference type="ChEBI" id="CHEBI:57540"/>
    </ligand>
</feature>
<feature type="binding site" evidence="1">
    <location>
        <begin position="118"/>
        <end position="121"/>
    </location>
    <ligand>
        <name>NAD(+)</name>
        <dbReference type="ChEBI" id="CHEBI:57540"/>
    </ligand>
</feature>
<feature type="binding site" evidence="1">
    <location>
        <position position="149"/>
    </location>
    <ligand>
        <name>(S)-2,3,4,5-tetrahydrodipicolinate</name>
        <dbReference type="ChEBI" id="CHEBI:16845"/>
    </ligand>
</feature>
<feature type="binding site" evidence="1">
    <location>
        <begin position="158"/>
        <end position="159"/>
    </location>
    <ligand>
        <name>(S)-2,3,4,5-tetrahydrodipicolinate</name>
        <dbReference type="ChEBI" id="CHEBI:16845"/>
    </ligand>
</feature>
<keyword id="KW-0028">Amino-acid biosynthesis</keyword>
<keyword id="KW-0963">Cytoplasm</keyword>
<keyword id="KW-0220">Diaminopimelate biosynthesis</keyword>
<keyword id="KW-0457">Lysine biosynthesis</keyword>
<keyword id="KW-0520">NAD</keyword>
<keyword id="KW-0521">NADP</keyword>
<keyword id="KW-0560">Oxidoreductase</keyword>
<reference key="1">
    <citation type="journal article" date="2007" name="J. Bacteriol.">
        <title>The complete genome sequence of the lactic acid bacterial paradigm Lactococcus lactis subsp. cremoris MG1363.</title>
        <authorList>
            <person name="Wegmann U."/>
            <person name="O'Connell-Motherway M."/>
            <person name="Zomer A."/>
            <person name="Buist G."/>
            <person name="Shearman C."/>
            <person name="Canchaya C."/>
            <person name="Ventura M."/>
            <person name="Goesmann A."/>
            <person name="Gasson M.J."/>
            <person name="Kuipers O.P."/>
            <person name="van Sinderen D."/>
            <person name="Kok J."/>
        </authorList>
    </citation>
    <scope>NUCLEOTIDE SEQUENCE [LARGE SCALE GENOMIC DNA]</scope>
    <source>
        <strain>MG1363</strain>
    </source>
</reference>
<accession>A2RJS9</accession>